<dbReference type="EC" id="3.6.4.12" evidence="1"/>
<dbReference type="EMBL" id="AB010108">
    <property type="protein sequence ID" value="BAA34732.1"/>
    <property type="molecule type" value="mRNA"/>
</dbReference>
<dbReference type="EMBL" id="AF124744">
    <property type="protein sequence ID" value="AAD32858.1"/>
    <property type="molecule type" value="mRNA"/>
</dbReference>
<dbReference type="EMBL" id="AE014298">
    <property type="protein sequence ID" value="AAF46184.1"/>
    <property type="molecule type" value="Genomic_DNA"/>
</dbReference>
<dbReference type="EMBL" id="AY052102">
    <property type="protein sequence ID" value="AAK93526.1"/>
    <property type="status" value="ALT_INIT"/>
    <property type="molecule type" value="mRNA"/>
</dbReference>
<dbReference type="RefSeq" id="NP_511065.1">
    <property type="nucleotide sequence ID" value="NM_078510.3"/>
</dbReference>
<dbReference type="PDB" id="6RAW">
    <property type="method" value="EM"/>
    <property type="resolution" value="3.70 A"/>
    <property type="chains" value="6=1-817"/>
</dbReference>
<dbReference type="PDB" id="6RAX">
    <property type="method" value="EM"/>
    <property type="resolution" value="3.99 A"/>
    <property type="chains" value="6=1-817"/>
</dbReference>
<dbReference type="PDB" id="6RAY">
    <property type="method" value="EM"/>
    <property type="resolution" value="4.28 A"/>
    <property type="chains" value="6=1-817"/>
</dbReference>
<dbReference type="PDB" id="6RAZ">
    <property type="method" value="EM"/>
    <property type="resolution" value="4.46 A"/>
    <property type="chains" value="6=1-817"/>
</dbReference>
<dbReference type="PDBsum" id="6RAW"/>
<dbReference type="PDBsum" id="6RAX"/>
<dbReference type="PDBsum" id="6RAY"/>
<dbReference type="PDBsum" id="6RAZ"/>
<dbReference type="EMDB" id="EMD-2772"/>
<dbReference type="EMDB" id="EMD-3318"/>
<dbReference type="EMDB" id="EMD-3319"/>
<dbReference type="EMDB" id="EMD-3320"/>
<dbReference type="EMDB" id="EMD-3321"/>
<dbReference type="EMDB" id="EMD-4785"/>
<dbReference type="EMDB" id="EMD-4786"/>
<dbReference type="EMDB" id="EMD-4787"/>
<dbReference type="EMDB" id="EMD-4788"/>
<dbReference type="SMR" id="Q9V461"/>
<dbReference type="BioGRID" id="58089">
    <property type="interactions" value="15"/>
</dbReference>
<dbReference type="ComplexPortal" id="CPX-2942">
    <property type="entry name" value="MCM complex"/>
</dbReference>
<dbReference type="DIP" id="DIP-35347N"/>
<dbReference type="FunCoup" id="Q9V461">
    <property type="interactions" value="1483"/>
</dbReference>
<dbReference type="IntAct" id="Q9V461">
    <property type="interactions" value="25"/>
</dbReference>
<dbReference type="STRING" id="7227.FBpp0070913"/>
<dbReference type="PaxDb" id="7227-FBpp0070913"/>
<dbReference type="EnsemblMetazoa" id="FBtr0070952">
    <property type="protein sequence ID" value="FBpp0070913"/>
    <property type="gene ID" value="FBgn0025815"/>
</dbReference>
<dbReference type="GeneID" id="31603"/>
<dbReference type="KEGG" id="dme:Dmel_CG4039"/>
<dbReference type="AGR" id="FB:FBgn0025815"/>
<dbReference type="CTD" id="4175"/>
<dbReference type="FlyBase" id="FBgn0025815">
    <property type="gene designation" value="Mcm6"/>
</dbReference>
<dbReference type="VEuPathDB" id="VectorBase:FBgn0025815"/>
<dbReference type="eggNOG" id="KOG0480">
    <property type="taxonomic scope" value="Eukaryota"/>
</dbReference>
<dbReference type="GeneTree" id="ENSGT01050000244824"/>
<dbReference type="HOGENOM" id="CLU_000995_3_2_1"/>
<dbReference type="InParanoid" id="Q9V461"/>
<dbReference type="OMA" id="RHQQTDK"/>
<dbReference type="OrthoDB" id="1744952at2759"/>
<dbReference type="PhylomeDB" id="Q9V461"/>
<dbReference type="Reactome" id="R-DME-176187">
    <property type="pathway name" value="Activation of ATR in response to replication stress"/>
</dbReference>
<dbReference type="Reactome" id="R-DME-68867">
    <property type="pathway name" value="Assembly of the pre-replicative complex"/>
</dbReference>
<dbReference type="Reactome" id="R-DME-68949">
    <property type="pathway name" value="Orc1 removal from chromatin"/>
</dbReference>
<dbReference type="Reactome" id="R-DME-68962">
    <property type="pathway name" value="Activation of the pre-replicative complex"/>
</dbReference>
<dbReference type="Reactome" id="R-DME-69052">
    <property type="pathway name" value="Switching of origins to a post-replicative state"/>
</dbReference>
<dbReference type="BioGRID-ORCS" id="31603">
    <property type="hits" value="1 hit in 1 CRISPR screen"/>
</dbReference>
<dbReference type="GenomeRNAi" id="31603"/>
<dbReference type="PRO" id="PR:Q9V461"/>
<dbReference type="Proteomes" id="UP000000803">
    <property type="component" value="Chromosome X"/>
</dbReference>
<dbReference type="Bgee" id="FBgn0025815">
    <property type="expression patterns" value="Expressed in cleaving embryo and 34 other cell types or tissues"/>
</dbReference>
<dbReference type="ExpressionAtlas" id="Q9V461">
    <property type="expression patterns" value="baseline and differential"/>
</dbReference>
<dbReference type="GO" id="GO:0071162">
    <property type="term" value="C:CMG complex"/>
    <property type="evidence" value="ECO:0000314"/>
    <property type="project" value="FlyBase"/>
</dbReference>
<dbReference type="GO" id="GO:0042555">
    <property type="term" value="C:MCM complex"/>
    <property type="evidence" value="ECO:0000314"/>
    <property type="project" value="FlyBase"/>
</dbReference>
<dbReference type="GO" id="GO:0005634">
    <property type="term" value="C:nucleus"/>
    <property type="evidence" value="ECO:0000314"/>
    <property type="project" value="UniProtKB"/>
</dbReference>
<dbReference type="GO" id="GO:0005524">
    <property type="term" value="F:ATP binding"/>
    <property type="evidence" value="ECO:0007669"/>
    <property type="project" value="UniProtKB-KW"/>
</dbReference>
<dbReference type="GO" id="GO:0016887">
    <property type="term" value="F:ATP hydrolysis activity"/>
    <property type="evidence" value="ECO:0007669"/>
    <property type="project" value="RHEA"/>
</dbReference>
<dbReference type="GO" id="GO:0003678">
    <property type="term" value="F:DNA helicase activity"/>
    <property type="evidence" value="ECO:0007669"/>
    <property type="project" value="InterPro"/>
</dbReference>
<dbReference type="GO" id="GO:0003697">
    <property type="term" value="F:single-stranded DNA binding"/>
    <property type="evidence" value="ECO:0000318"/>
    <property type="project" value="GO_Central"/>
</dbReference>
<dbReference type="GO" id="GO:0008270">
    <property type="term" value="F:zinc ion binding"/>
    <property type="evidence" value="ECO:0007669"/>
    <property type="project" value="UniProtKB-KW"/>
</dbReference>
<dbReference type="GO" id="GO:0051301">
    <property type="term" value="P:cell division"/>
    <property type="evidence" value="ECO:0007669"/>
    <property type="project" value="UniProtKB-KW"/>
</dbReference>
<dbReference type="GO" id="GO:0006260">
    <property type="term" value="P:DNA replication"/>
    <property type="evidence" value="ECO:0000315"/>
    <property type="project" value="UniProtKB"/>
</dbReference>
<dbReference type="GO" id="GO:0006270">
    <property type="term" value="P:DNA replication initiation"/>
    <property type="evidence" value="ECO:0007669"/>
    <property type="project" value="InterPro"/>
</dbReference>
<dbReference type="GO" id="GO:0000727">
    <property type="term" value="P:double-strand break repair via break-induced replication"/>
    <property type="evidence" value="ECO:0000318"/>
    <property type="project" value="GO_Central"/>
</dbReference>
<dbReference type="GO" id="GO:0007307">
    <property type="term" value="P:eggshell chorion gene amplification"/>
    <property type="evidence" value="ECO:0000315"/>
    <property type="project" value="FlyBase"/>
</dbReference>
<dbReference type="GO" id="GO:1902969">
    <property type="term" value="P:mitotic DNA replication"/>
    <property type="evidence" value="ECO:0000318"/>
    <property type="project" value="GO_Central"/>
</dbReference>
<dbReference type="GO" id="GO:0006279">
    <property type="term" value="P:premeiotic DNA replication"/>
    <property type="evidence" value="ECO:0000303"/>
    <property type="project" value="ComplexPortal"/>
</dbReference>
<dbReference type="CDD" id="cd17757">
    <property type="entry name" value="MCM6"/>
    <property type="match status" value="1"/>
</dbReference>
<dbReference type="FunFam" id="1.20.58.870:FF:000001">
    <property type="entry name" value="DNA helicase"/>
    <property type="match status" value="1"/>
</dbReference>
<dbReference type="FunFam" id="2.20.28.10:FF:000003">
    <property type="entry name" value="DNA helicase"/>
    <property type="match status" value="1"/>
</dbReference>
<dbReference type="FunFam" id="2.40.50.140:FF:000091">
    <property type="entry name" value="DNA helicase"/>
    <property type="match status" value="1"/>
</dbReference>
<dbReference type="FunFam" id="3.30.1640.10:FF:000004">
    <property type="entry name" value="DNA helicase"/>
    <property type="match status" value="1"/>
</dbReference>
<dbReference type="FunFam" id="3.40.50.300:FF:000115">
    <property type="entry name" value="DNA helicase"/>
    <property type="match status" value="1"/>
</dbReference>
<dbReference type="Gene3D" id="1.20.58.870">
    <property type="match status" value="1"/>
</dbReference>
<dbReference type="Gene3D" id="2.20.28.10">
    <property type="match status" value="1"/>
</dbReference>
<dbReference type="Gene3D" id="3.30.1640.10">
    <property type="entry name" value="mini-chromosome maintenance (MCM) complex, chain A, domain 1"/>
    <property type="match status" value="1"/>
</dbReference>
<dbReference type="Gene3D" id="2.40.50.140">
    <property type="entry name" value="Nucleic acid-binding proteins"/>
    <property type="match status" value="1"/>
</dbReference>
<dbReference type="Gene3D" id="3.40.50.300">
    <property type="entry name" value="P-loop containing nucleotide triphosphate hydrolases"/>
    <property type="match status" value="1"/>
</dbReference>
<dbReference type="InterPro" id="IPR031327">
    <property type="entry name" value="MCM"/>
</dbReference>
<dbReference type="InterPro" id="IPR008049">
    <property type="entry name" value="MCM6"/>
</dbReference>
<dbReference type="InterPro" id="IPR041024">
    <property type="entry name" value="Mcm6_C"/>
</dbReference>
<dbReference type="InterPro" id="IPR018525">
    <property type="entry name" value="MCM_CS"/>
</dbReference>
<dbReference type="InterPro" id="IPR001208">
    <property type="entry name" value="MCM_dom"/>
</dbReference>
<dbReference type="InterPro" id="IPR041562">
    <property type="entry name" value="MCM_lid"/>
</dbReference>
<dbReference type="InterPro" id="IPR027925">
    <property type="entry name" value="MCM_N"/>
</dbReference>
<dbReference type="InterPro" id="IPR033762">
    <property type="entry name" value="MCM_OB"/>
</dbReference>
<dbReference type="InterPro" id="IPR012340">
    <property type="entry name" value="NA-bd_OB-fold"/>
</dbReference>
<dbReference type="InterPro" id="IPR027417">
    <property type="entry name" value="P-loop_NTPase"/>
</dbReference>
<dbReference type="PANTHER" id="PTHR11630">
    <property type="entry name" value="DNA REPLICATION LICENSING FACTOR MCM FAMILY MEMBER"/>
    <property type="match status" value="1"/>
</dbReference>
<dbReference type="PANTHER" id="PTHR11630:SF43">
    <property type="entry name" value="DNA REPLICATION LICENSING FACTOR MCM6"/>
    <property type="match status" value="1"/>
</dbReference>
<dbReference type="Pfam" id="PF00493">
    <property type="entry name" value="MCM"/>
    <property type="match status" value="1"/>
</dbReference>
<dbReference type="Pfam" id="PF18263">
    <property type="entry name" value="MCM6_C"/>
    <property type="match status" value="1"/>
</dbReference>
<dbReference type="Pfam" id="PF17855">
    <property type="entry name" value="MCM_lid"/>
    <property type="match status" value="1"/>
</dbReference>
<dbReference type="Pfam" id="PF14551">
    <property type="entry name" value="MCM_N"/>
    <property type="match status" value="1"/>
</dbReference>
<dbReference type="Pfam" id="PF17207">
    <property type="entry name" value="MCM_OB"/>
    <property type="match status" value="1"/>
</dbReference>
<dbReference type="PRINTS" id="PR01657">
    <property type="entry name" value="MCMFAMILY"/>
</dbReference>
<dbReference type="PRINTS" id="PR01662">
    <property type="entry name" value="MCMPROTEIN6"/>
</dbReference>
<dbReference type="SMART" id="SM00350">
    <property type="entry name" value="MCM"/>
    <property type="match status" value="1"/>
</dbReference>
<dbReference type="SUPFAM" id="SSF50249">
    <property type="entry name" value="Nucleic acid-binding proteins"/>
    <property type="match status" value="1"/>
</dbReference>
<dbReference type="SUPFAM" id="SSF52540">
    <property type="entry name" value="P-loop containing nucleoside triphosphate hydrolases"/>
    <property type="match status" value="1"/>
</dbReference>
<dbReference type="PROSITE" id="PS00847">
    <property type="entry name" value="MCM_1"/>
    <property type="match status" value="1"/>
</dbReference>
<dbReference type="PROSITE" id="PS50051">
    <property type="entry name" value="MCM_2"/>
    <property type="match status" value="1"/>
</dbReference>
<protein>
    <recommendedName>
        <fullName>DNA replication licensing factor Mcm6</fullName>
        <shortName>DmMCM6</shortName>
        <ecNumber evidence="1">3.6.4.12</ecNumber>
    </recommendedName>
</protein>
<accession>Q9V461</accession>
<accession>O96047</accession>
<accession>Q960E3</accession>
<gene>
    <name evidence="13 16" type="primary">Mcm6</name>
    <name type="ORF">CG4039</name>
</gene>
<evidence type="ECO:0000250" key="1">
    <source>
        <dbReference type="UniProtKB" id="P97311"/>
    </source>
</evidence>
<evidence type="ECO:0000250" key="2">
    <source>
        <dbReference type="UniProtKB" id="Q14566"/>
    </source>
</evidence>
<evidence type="ECO:0000255" key="3"/>
<evidence type="ECO:0000269" key="4">
    <source>
    </source>
</evidence>
<evidence type="ECO:0000269" key="5">
    <source>
    </source>
</evidence>
<evidence type="ECO:0000269" key="6">
    <source>
    </source>
</evidence>
<evidence type="ECO:0000269" key="7">
    <source>
    </source>
</evidence>
<evidence type="ECO:0000269" key="8">
    <source>
    </source>
</evidence>
<evidence type="ECO:0000269" key="9">
    <source>
    </source>
</evidence>
<evidence type="ECO:0000269" key="10">
    <source>
    </source>
</evidence>
<evidence type="ECO:0000305" key="11"/>
<evidence type="ECO:0000312" key="12">
    <source>
        <dbReference type="EMBL" id="AAD32858.1"/>
    </source>
</evidence>
<evidence type="ECO:0000312" key="13">
    <source>
        <dbReference type="EMBL" id="AAF46184.1"/>
    </source>
</evidence>
<evidence type="ECO:0000312" key="14">
    <source>
        <dbReference type="EMBL" id="AAK93526.1"/>
    </source>
</evidence>
<evidence type="ECO:0000312" key="15">
    <source>
        <dbReference type="EMBL" id="BAA34732.1"/>
    </source>
</evidence>
<evidence type="ECO:0000312" key="16">
    <source>
        <dbReference type="FlyBase" id="FBgn0025815"/>
    </source>
</evidence>
<proteinExistence type="evidence at protein level"/>
<sequence length="817" mass="92353">MDVADAQVGQLRVKDEVGIRAQKLFQDFLEEFKEDGEIKYTRPAASLESPDRCTLEVSFEDVEKYDQNLATAIIEEYYHIYPFLCQSVSNYVKDRIGLKTQKDCYVAFTEVPTRHKVRDLTTSKIGTLIRISGQVVRTHPVHPELVSGVFMCLDCQTEIRNVEQQFKFTNPTICRNPVCSNRKRFMLDVEKSLFLDFQKIRIQETQAELPRGCIPRAVEIILRSELVETVQAGDRYDFTGTLIVVPDVSVLAGVGTRAENSSRHKPGEGMDGVTGLKALGMRELNYRMAFLACSVQATTARFGGTDLPMSEVTAEDMKKQMTDAEWHKIYEMSKDRNLYQNLISSLFPSIYGNDEVKRGILLQQFGGVAKTTTEKTSLRGDINVCIVGDPSTAKSQFLKQVSDFSPRAIYTSGKASSAAGLTAAVVRDEESFDFVIEAGALMLADNGICCIDEFDKMDQRDQVAIHEAMEQQTISIARAGVRATLNARTSILAAANPINGRYDRSKSLQQNIQLSAPIMSRFDLFFILVDECNEVVDYAIARKIVDLHSNIEESVERAYTREEVLRYVTFARQFKPVISQEAGHMLVENYGHLRQRDTGTSGRSTWRITVRQLESMIRLSEAMAKLECSNRVLERHVKEAFRLLNKSIIRVEQPDIHLDDDEGLDMDDGIQHDIDMENNGAAANVDENNGMDTSASGAVQKKKFTLSFEDYKNLSTMLVLHMRAEEARCEVEGNDTGIKRSNVVTWYLEQVADQIESEDELISRKNLIEKLIDRLIYHDQVIIPLKTSTLKPRIQVQKDFVEEDDPLLVVHPNYVVE</sequence>
<feature type="chain" id="PRO_0000233315" description="DNA replication licensing factor Mcm6">
    <location>
        <begin position="1"/>
        <end position="817"/>
    </location>
</feature>
<feature type="domain" description="MCM" evidence="3">
    <location>
        <begin position="338"/>
        <end position="544"/>
    </location>
</feature>
<feature type="zinc finger region" description="C4-type" evidence="3">
    <location>
        <begin position="152"/>
        <end position="179"/>
    </location>
</feature>
<feature type="short sequence motif" description="Arginine finger">
    <location>
        <begin position="520"/>
        <end position="523"/>
    </location>
</feature>
<feature type="binding site" evidence="2">
    <location>
        <position position="391"/>
    </location>
    <ligand>
        <name>ATP</name>
        <dbReference type="ChEBI" id="CHEBI:30616"/>
        <note>ligand shared with MCM4</note>
    </ligand>
</feature>
<feature type="binding site" evidence="2">
    <location>
        <position position="392"/>
    </location>
    <ligand>
        <name>ATP</name>
        <dbReference type="ChEBI" id="CHEBI:30616"/>
        <note>ligand shared with MCM4</note>
    </ligand>
</feature>
<feature type="binding site" evidence="2">
    <location>
        <position position="393"/>
    </location>
    <ligand>
        <name>ATP</name>
        <dbReference type="ChEBI" id="CHEBI:30616"/>
        <note>ligand shared with MCM4</note>
    </ligand>
</feature>
<feature type="binding site" evidence="2">
    <location>
        <position position="394"/>
    </location>
    <ligand>
        <name>ATP</name>
        <dbReference type="ChEBI" id="CHEBI:30616"/>
        <note>ligand shared with MCM4</note>
    </ligand>
</feature>
<feature type="binding site" evidence="2">
    <location>
        <position position="395"/>
    </location>
    <ligand>
        <name>ATP</name>
        <dbReference type="ChEBI" id="CHEBI:30616"/>
        <note>ligand shared with MCM4</note>
    </ligand>
</feature>
<feature type="binding site" evidence="2">
    <location>
        <position position="496"/>
    </location>
    <ligand>
        <name>ATP</name>
        <dbReference type="ChEBI" id="CHEBI:30616"/>
        <note>ligand shared with MCM4</note>
    </ligand>
</feature>
<feature type="binding site" evidence="2">
    <location>
        <position position="611"/>
    </location>
    <ligand>
        <name>ADP</name>
        <dbReference type="ChEBI" id="CHEBI:456216"/>
        <note>ligand shared with MCM2</note>
    </ligand>
</feature>
<feature type="binding site" evidence="2">
    <location>
        <position position="614"/>
    </location>
    <ligand>
        <name>ADP</name>
        <dbReference type="ChEBI" id="CHEBI:456216"/>
        <note>ligand shared with MCM2</note>
    </ligand>
</feature>
<feature type="mutagenesis site" description="In allele 4; homozygous lethal." evidence="6">
    <original>T</original>
    <variation>M</variation>
    <location>
        <position position="157"/>
    </location>
</feature>
<feature type="mutagenesis site" description="In allele 5; homozygous lethal." evidence="6">
    <original>G</original>
    <variation>D</variation>
    <location>
        <position position="388"/>
    </location>
</feature>
<feature type="mutagenesis site" description="Slihgtly reduces complex helicase activity." evidence="9">
    <original>K</original>
    <variation>A</variation>
    <location>
        <position position="394"/>
    </location>
</feature>
<feature type="mutagenesis site" description="In allele K1214; eggs exhibit thin shell and flimsy dorsal appendages." evidence="6">
    <original>M</original>
    <variation>K</variation>
    <location>
        <position position="676"/>
    </location>
</feature>
<feature type="sequence conflict" description="In Ref. 1; BAA34732." evidence="11" ref="1">
    <original>QL</original>
    <variation>HV</variation>
    <location>
        <begin position="10"/>
        <end position="11"/>
    </location>
</feature>
<feature type="sequence conflict" description="In Ref. 1; BAA34732." evidence="11" ref="1">
    <original>N</original>
    <variation>K</variation>
    <location>
        <position position="550"/>
    </location>
</feature>
<feature type="sequence conflict" description="In Ref. 1 and 6." evidence="11" ref="1 6">
    <original>A</original>
    <variation>G</variation>
    <location>
        <position position="695"/>
    </location>
</feature>
<comment type="function">
    <text evidence="6 8 9">Acts as a component of the Mcm2-7 complex (Mcm complex) which is the putative replicative helicase essential for 'once per cell cycle' DNA replication initiation and elongation in eukaryotic cells. Core component of CDC45-MCM-GINS (CMG) helicase, the molecular machine that unwinds template DNA during replication, and around which the replisome is built. The active ATPase sites in the Mcm2-7 ring are formed through the interaction surfaces of two neighboring subunits such that a critical structure of a conserved arginine finger motif is provided in trans relative to the ATP-binding site of the Walker A box of the adjacent subunit. The six ATPase active sites, however, are likely to contribute differentially to the complex helicase activity Required for DNA replication and cell proliferation. Required for mitotic cycles, endocycles, and the special S phase associated with the amplification of chorion genes; has a role in origin unwinding or fork elongation at chorion loci.</text>
</comment>
<comment type="catalytic activity">
    <reaction evidence="1">
        <text>ATP + H2O = ADP + phosphate + H(+)</text>
        <dbReference type="Rhea" id="RHEA:13065"/>
        <dbReference type="ChEBI" id="CHEBI:15377"/>
        <dbReference type="ChEBI" id="CHEBI:15378"/>
        <dbReference type="ChEBI" id="CHEBI:30616"/>
        <dbReference type="ChEBI" id="CHEBI:43474"/>
        <dbReference type="ChEBI" id="CHEBI:456216"/>
        <dbReference type="EC" id="3.6.4.12"/>
    </reaction>
    <physiologicalReaction direction="left-to-right" evidence="1">
        <dbReference type="Rhea" id="RHEA:13066"/>
    </physiologicalReaction>
</comment>
<comment type="subunit">
    <text evidence="8 11">Component of the Mcm2-7 complex. The complex forms a toroidal hexameric ring with the proposed subunit order Mcm2-Mcm6-Mcm4-Mcm7-Mcm3-Mcm5 (Probable). The heterodimers of Mcm4/Mcm6 and Mcm3/Mcm5 interact with Mcm2 and Mcm7.</text>
</comment>
<comment type="interaction">
    <interactant intactId="EBI-869161">
        <id>Q9V461</id>
    </interactant>
    <interactant intactId="EBI-175772">
        <id>Q26454</id>
        <label>dpa</label>
    </interactant>
    <organismsDiffer>false</organismsDiffer>
    <experiments>4</experiments>
</comment>
<comment type="interaction">
    <interactant intactId="EBI-869161">
        <id>Q9V461</id>
    </interactant>
    <interactant intactId="EBI-138228">
        <id>P49735</id>
        <label>Mcm2</label>
    </interactant>
    <organismsDiffer>false</organismsDiffer>
    <experiments>13</experiments>
</comment>
<comment type="subcellular location">
    <subcellularLocation>
        <location evidence="6">Nucleus</location>
    </subcellularLocation>
    <text>Associated with chromatin during cell cycles.</text>
</comment>
<comment type="tissue specificity">
    <text evidence="4">In stage 12 embryos, strongly expressed in the CNS and weakly in the gut.</text>
</comment>
<comment type="developmental stage">
    <text evidence="10">Expressed both maternally and zygotically.</text>
</comment>
<comment type="miscellaneous">
    <text evidence="1">Early fractionation of eukaryotic MCM proteins yielded a variety of dimeric, trimeric and tetrameric complexes with unclear biological significance. Specifically a MCM467 subcomplex is shown to have in vitro helicase activity which is inhibited by the MCM2 subunit. The MCM2-7 hexamer is the proposed physiological active complex.</text>
</comment>
<comment type="similarity">
    <text evidence="3">Belongs to the MCM family.</text>
</comment>
<comment type="sequence caution" evidence="11">
    <conflict type="erroneous initiation">
        <sequence resource="EMBL-CDS" id="AAK93526"/>
    </conflict>
    <text>Truncated N-terminus.</text>
</comment>
<reference evidence="11 15" key="1">
    <citation type="journal article" date="1998" name="Gene">
        <title>cDNA cloning and expression during development of Drosophila melanogaster MCM3, MCM6 and MCM7.</title>
        <authorList>
            <person name="Ohno K."/>
            <person name="Hirose F."/>
            <person name="Inoue Y.H."/>
            <person name="Takisawa H."/>
            <person name="Mimura S."/>
            <person name="Hashimoto Y."/>
            <person name="Kiyono T."/>
            <person name="Nishida Y."/>
            <person name="Matsukage A."/>
        </authorList>
    </citation>
    <scope>NUCLEOTIDE SEQUENCE [MRNA]</scope>
    <scope>DEVELOPMENTAL STAGE</scope>
    <source>
        <tissue evidence="10">Oocyte</tissue>
    </source>
</reference>
<reference evidence="11 12" key="2">
    <citation type="journal article" date="1999" name="Gene">
        <title>Identification and complete cDNA sequence of the missing Drosophila MCMs: DmMCM3, DmMCM6 and DmMCM7.</title>
        <authorList>
            <person name="Feger G."/>
        </authorList>
    </citation>
    <scope>NUCLEOTIDE SEQUENCE [MRNA]</scope>
    <scope>TISSUE SPECIFICITY</scope>
</reference>
<reference evidence="11" key="3">
    <citation type="journal article" date="2002" name="Mol. Biol. Cell">
        <title>Drosophila minichromosome maintenance 6 is required for chorion gene amplification and genomic replication.</title>
        <authorList>
            <person name="Schwed G."/>
            <person name="May N."/>
            <person name="Pechersky Y."/>
            <person name="Calvi B.R."/>
        </authorList>
    </citation>
    <scope>NUCLEOTIDE SEQUENCE [GENOMIC DNA]</scope>
    <scope>FUNCTION</scope>
    <scope>INTERACTION WITH MCM2; MCM4 AND MCM5</scope>
    <scope>SUBCELLULAR LOCATION</scope>
    <scope>MUTAGENESIS OF THR-157; GLY-388 AND MET-676</scope>
</reference>
<reference evidence="13" key="4">
    <citation type="journal article" date="2000" name="Science">
        <title>The genome sequence of Drosophila melanogaster.</title>
        <authorList>
            <person name="Adams M.D."/>
            <person name="Celniker S.E."/>
            <person name="Holt R.A."/>
            <person name="Evans C.A."/>
            <person name="Gocayne J.D."/>
            <person name="Amanatides P.G."/>
            <person name="Scherer S.E."/>
            <person name="Li P.W."/>
            <person name="Hoskins R.A."/>
            <person name="Galle R.F."/>
            <person name="George R.A."/>
            <person name="Lewis S.E."/>
            <person name="Richards S."/>
            <person name="Ashburner M."/>
            <person name="Henderson S.N."/>
            <person name="Sutton G.G."/>
            <person name="Wortman J.R."/>
            <person name="Yandell M.D."/>
            <person name="Zhang Q."/>
            <person name="Chen L.X."/>
            <person name="Brandon R.C."/>
            <person name="Rogers Y.-H.C."/>
            <person name="Blazej R.G."/>
            <person name="Champe M."/>
            <person name="Pfeiffer B.D."/>
            <person name="Wan K.H."/>
            <person name="Doyle C."/>
            <person name="Baxter E.G."/>
            <person name="Helt G."/>
            <person name="Nelson C.R."/>
            <person name="Miklos G.L.G."/>
            <person name="Abril J.F."/>
            <person name="Agbayani A."/>
            <person name="An H.-J."/>
            <person name="Andrews-Pfannkoch C."/>
            <person name="Baldwin D."/>
            <person name="Ballew R.M."/>
            <person name="Basu A."/>
            <person name="Baxendale J."/>
            <person name="Bayraktaroglu L."/>
            <person name="Beasley E.M."/>
            <person name="Beeson K.Y."/>
            <person name="Benos P.V."/>
            <person name="Berman B.P."/>
            <person name="Bhandari D."/>
            <person name="Bolshakov S."/>
            <person name="Borkova D."/>
            <person name="Botchan M.R."/>
            <person name="Bouck J."/>
            <person name="Brokstein P."/>
            <person name="Brottier P."/>
            <person name="Burtis K.C."/>
            <person name="Busam D.A."/>
            <person name="Butler H."/>
            <person name="Cadieu E."/>
            <person name="Center A."/>
            <person name="Chandra I."/>
            <person name="Cherry J.M."/>
            <person name="Cawley S."/>
            <person name="Dahlke C."/>
            <person name="Davenport L.B."/>
            <person name="Davies P."/>
            <person name="de Pablos B."/>
            <person name="Delcher A."/>
            <person name="Deng Z."/>
            <person name="Mays A.D."/>
            <person name="Dew I."/>
            <person name="Dietz S.M."/>
            <person name="Dodson K."/>
            <person name="Doup L.E."/>
            <person name="Downes M."/>
            <person name="Dugan-Rocha S."/>
            <person name="Dunkov B.C."/>
            <person name="Dunn P."/>
            <person name="Durbin K.J."/>
            <person name="Evangelista C.C."/>
            <person name="Ferraz C."/>
            <person name="Ferriera S."/>
            <person name="Fleischmann W."/>
            <person name="Fosler C."/>
            <person name="Gabrielian A.E."/>
            <person name="Garg N.S."/>
            <person name="Gelbart W.M."/>
            <person name="Glasser K."/>
            <person name="Glodek A."/>
            <person name="Gong F."/>
            <person name="Gorrell J.H."/>
            <person name="Gu Z."/>
            <person name="Guan P."/>
            <person name="Harris M."/>
            <person name="Harris N.L."/>
            <person name="Harvey D.A."/>
            <person name="Heiman T.J."/>
            <person name="Hernandez J.R."/>
            <person name="Houck J."/>
            <person name="Hostin D."/>
            <person name="Houston K.A."/>
            <person name="Howland T.J."/>
            <person name="Wei M.-H."/>
            <person name="Ibegwam C."/>
            <person name="Jalali M."/>
            <person name="Kalush F."/>
            <person name="Karpen G.H."/>
            <person name="Ke Z."/>
            <person name="Kennison J.A."/>
            <person name="Ketchum K.A."/>
            <person name="Kimmel B.E."/>
            <person name="Kodira C.D."/>
            <person name="Kraft C.L."/>
            <person name="Kravitz S."/>
            <person name="Kulp D."/>
            <person name="Lai Z."/>
            <person name="Lasko P."/>
            <person name="Lei Y."/>
            <person name="Levitsky A.A."/>
            <person name="Li J.H."/>
            <person name="Li Z."/>
            <person name="Liang Y."/>
            <person name="Lin X."/>
            <person name="Liu X."/>
            <person name="Mattei B."/>
            <person name="McIntosh T.C."/>
            <person name="McLeod M.P."/>
            <person name="McPherson D."/>
            <person name="Merkulov G."/>
            <person name="Milshina N.V."/>
            <person name="Mobarry C."/>
            <person name="Morris J."/>
            <person name="Moshrefi A."/>
            <person name="Mount S.M."/>
            <person name="Moy M."/>
            <person name="Murphy B."/>
            <person name="Murphy L."/>
            <person name="Muzny D.M."/>
            <person name="Nelson D.L."/>
            <person name="Nelson D.R."/>
            <person name="Nelson K.A."/>
            <person name="Nixon K."/>
            <person name="Nusskern D.R."/>
            <person name="Pacleb J.M."/>
            <person name="Palazzolo M."/>
            <person name="Pittman G.S."/>
            <person name="Pan S."/>
            <person name="Pollard J."/>
            <person name="Puri V."/>
            <person name="Reese M.G."/>
            <person name="Reinert K."/>
            <person name="Remington K."/>
            <person name="Saunders R.D.C."/>
            <person name="Scheeler F."/>
            <person name="Shen H."/>
            <person name="Shue B.C."/>
            <person name="Siden-Kiamos I."/>
            <person name="Simpson M."/>
            <person name="Skupski M.P."/>
            <person name="Smith T.J."/>
            <person name="Spier E."/>
            <person name="Spradling A.C."/>
            <person name="Stapleton M."/>
            <person name="Strong R."/>
            <person name="Sun E."/>
            <person name="Svirskas R."/>
            <person name="Tector C."/>
            <person name="Turner R."/>
            <person name="Venter E."/>
            <person name="Wang A.H."/>
            <person name="Wang X."/>
            <person name="Wang Z.-Y."/>
            <person name="Wassarman D.A."/>
            <person name="Weinstock G.M."/>
            <person name="Weissenbach J."/>
            <person name="Williams S.M."/>
            <person name="Woodage T."/>
            <person name="Worley K.C."/>
            <person name="Wu D."/>
            <person name="Yang S."/>
            <person name="Yao Q.A."/>
            <person name="Ye J."/>
            <person name="Yeh R.-F."/>
            <person name="Zaveri J.S."/>
            <person name="Zhan M."/>
            <person name="Zhang G."/>
            <person name="Zhao Q."/>
            <person name="Zheng L."/>
            <person name="Zheng X.H."/>
            <person name="Zhong F.N."/>
            <person name="Zhong W."/>
            <person name="Zhou X."/>
            <person name="Zhu S.C."/>
            <person name="Zhu X."/>
            <person name="Smith H.O."/>
            <person name="Gibbs R.A."/>
            <person name="Myers E.W."/>
            <person name="Rubin G.M."/>
            <person name="Venter J.C."/>
        </authorList>
    </citation>
    <scope>NUCLEOTIDE SEQUENCE [LARGE SCALE GENOMIC DNA]</scope>
    <source>
        <strain evidence="5">Berkeley</strain>
    </source>
</reference>
<reference evidence="11 13" key="5">
    <citation type="journal article" date="2002" name="Genome Biol.">
        <title>Annotation of the Drosophila melanogaster euchromatic genome: a systematic review.</title>
        <authorList>
            <person name="Misra S."/>
            <person name="Crosby M.A."/>
            <person name="Mungall C.J."/>
            <person name="Matthews B.B."/>
            <person name="Campbell K.S."/>
            <person name="Hradecky P."/>
            <person name="Huang Y."/>
            <person name="Kaminker J.S."/>
            <person name="Millburn G.H."/>
            <person name="Prochnik S.E."/>
            <person name="Smith C.D."/>
            <person name="Tupy J.L."/>
            <person name="Whitfield E.J."/>
            <person name="Bayraktaroglu L."/>
            <person name="Berman B.P."/>
            <person name="Bettencourt B.R."/>
            <person name="Celniker S.E."/>
            <person name="de Grey A.D.N.J."/>
            <person name="Drysdale R.A."/>
            <person name="Harris N.L."/>
            <person name="Richter J."/>
            <person name="Russo S."/>
            <person name="Schroeder A.J."/>
            <person name="Shu S.Q."/>
            <person name="Stapleton M."/>
            <person name="Yamada C."/>
            <person name="Ashburner M."/>
            <person name="Gelbart W.M."/>
            <person name="Rubin G.M."/>
            <person name="Lewis S.E."/>
        </authorList>
    </citation>
    <scope>GENOME REANNOTATION</scope>
    <source>
        <strain>Berkeley</strain>
    </source>
</reference>
<reference evidence="11 14" key="6">
    <citation type="journal article" date="2002" name="Genome Biol.">
        <title>A Drosophila full-length cDNA resource.</title>
        <authorList>
            <person name="Stapleton M."/>
            <person name="Carlson J.W."/>
            <person name="Brokstein P."/>
            <person name="Yu C."/>
            <person name="Champe M."/>
            <person name="George R.A."/>
            <person name="Guarin H."/>
            <person name="Kronmiller B."/>
            <person name="Pacleb J.M."/>
            <person name="Park S."/>
            <person name="Wan K.H."/>
            <person name="Rubin G.M."/>
            <person name="Celniker S.E."/>
        </authorList>
    </citation>
    <scope>NUCLEOTIDE SEQUENCE [LARGE SCALE MRNA] OF 231-817</scope>
    <source>
        <strain evidence="7">Berkeley</strain>
        <tissue evidence="7">Embryo</tissue>
    </source>
</reference>
<reference key="7">
    <citation type="journal article" date="2006" name="Proc. Natl. Acad. Sci. U.S.A.">
        <title>Isolation of the Cdc45/Mcm2-7/GINS (CMG) complex, a candidate for the eukaryotic DNA replication fork helicase.</title>
        <authorList>
            <person name="Moyer S.E."/>
            <person name="Lewis P.W."/>
            <person name="Botchan M.R."/>
        </authorList>
    </citation>
    <scope>IDENTIFICATION IN THE MCM2-7 COMPLEX</scope>
    <scope>FUNCTION OF THE MCM2-7 COMPLEX</scope>
</reference>
<reference key="8">
    <citation type="journal article" date="2010" name="Mol. Cell">
        <title>Activation of the MCM2-7 helicase by association with Cdc45 and GINS proteins.</title>
        <authorList>
            <person name="Ilves I."/>
            <person name="Petojevic T."/>
            <person name="Pesavento J.J."/>
            <person name="Botchan M.R."/>
        </authorList>
    </citation>
    <scope>RECONSTITUTION OF THE MCM2-7 COMPLEX</scope>
    <scope>FUNCTION OF THE MCM2-7 COMPLEX</scope>
    <scope>MUTAGENESIS OF LYS-394</scope>
</reference>
<organism>
    <name type="scientific">Drosophila melanogaster</name>
    <name type="common">Fruit fly</name>
    <dbReference type="NCBI Taxonomy" id="7227"/>
    <lineage>
        <taxon>Eukaryota</taxon>
        <taxon>Metazoa</taxon>
        <taxon>Ecdysozoa</taxon>
        <taxon>Arthropoda</taxon>
        <taxon>Hexapoda</taxon>
        <taxon>Insecta</taxon>
        <taxon>Pterygota</taxon>
        <taxon>Neoptera</taxon>
        <taxon>Endopterygota</taxon>
        <taxon>Diptera</taxon>
        <taxon>Brachycera</taxon>
        <taxon>Muscomorpha</taxon>
        <taxon>Ephydroidea</taxon>
        <taxon>Drosophilidae</taxon>
        <taxon>Drosophila</taxon>
        <taxon>Sophophora</taxon>
    </lineage>
</organism>
<name>MCM6_DROME</name>
<keyword id="KW-0002">3D-structure</keyword>
<keyword id="KW-0067">ATP-binding</keyword>
<keyword id="KW-0131">Cell cycle</keyword>
<keyword id="KW-0132">Cell division</keyword>
<keyword id="KW-0235">DNA replication</keyword>
<keyword id="KW-0238">DNA-binding</keyword>
<keyword id="KW-0347">Helicase</keyword>
<keyword id="KW-0378">Hydrolase</keyword>
<keyword id="KW-0479">Metal-binding</keyword>
<keyword id="KW-0498">Mitosis</keyword>
<keyword id="KW-0547">Nucleotide-binding</keyword>
<keyword id="KW-0539">Nucleus</keyword>
<keyword id="KW-1185">Reference proteome</keyword>
<keyword id="KW-0862">Zinc</keyword>
<keyword id="KW-0863">Zinc-finger</keyword>